<keyword id="KW-0687">Ribonucleoprotein</keyword>
<keyword id="KW-0689">Ribosomal protein</keyword>
<sequence length="91" mass="10235">MAVKIRLTRLGSKRNPFYRIVVADARSPRDGRIIEQIGTYNPTSANAPEIKVDEALALKWLNDGAKPTDTVHNILSKEGIMKKFDEQKKAK</sequence>
<name>RS16_STAAN</name>
<evidence type="ECO:0000255" key="1">
    <source>
        <dbReference type="HAMAP-Rule" id="MF_00385"/>
    </source>
</evidence>
<evidence type="ECO:0000305" key="2"/>
<gene>
    <name evidence="1" type="primary">rpsP</name>
    <name type="ordered locus">SA1081</name>
</gene>
<feature type="chain" id="PRO_0000167243" description="Small ribosomal subunit protein bS16">
    <location>
        <begin position="1"/>
        <end position="91"/>
    </location>
</feature>
<proteinExistence type="evidence at protein level"/>
<organism>
    <name type="scientific">Staphylococcus aureus (strain N315)</name>
    <dbReference type="NCBI Taxonomy" id="158879"/>
    <lineage>
        <taxon>Bacteria</taxon>
        <taxon>Bacillati</taxon>
        <taxon>Bacillota</taxon>
        <taxon>Bacilli</taxon>
        <taxon>Bacillales</taxon>
        <taxon>Staphylococcaceae</taxon>
        <taxon>Staphylococcus</taxon>
    </lineage>
</organism>
<reference key="1">
    <citation type="journal article" date="2001" name="Lancet">
        <title>Whole genome sequencing of meticillin-resistant Staphylococcus aureus.</title>
        <authorList>
            <person name="Kuroda M."/>
            <person name="Ohta T."/>
            <person name="Uchiyama I."/>
            <person name="Baba T."/>
            <person name="Yuzawa H."/>
            <person name="Kobayashi I."/>
            <person name="Cui L."/>
            <person name="Oguchi A."/>
            <person name="Aoki K."/>
            <person name="Nagai Y."/>
            <person name="Lian J.-Q."/>
            <person name="Ito T."/>
            <person name="Kanamori M."/>
            <person name="Matsumaru H."/>
            <person name="Maruyama A."/>
            <person name="Murakami H."/>
            <person name="Hosoyama A."/>
            <person name="Mizutani-Ui Y."/>
            <person name="Takahashi N.K."/>
            <person name="Sawano T."/>
            <person name="Inoue R."/>
            <person name="Kaito C."/>
            <person name="Sekimizu K."/>
            <person name="Hirakawa H."/>
            <person name="Kuhara S."/>
            <person name="Goto S."/>
            <person name="Yabuzaki J."/>
            <person name="Kanehisa M."/>
            <person name="Yamashita A."/>
            <person name="Oshima K."/>
            <person name="Furuya K."/>
            <person name="Yoshino C."/>
            <person name="Shiba T."/>
            <person name="Hattori M."/>
            <person name="Ogasawara N."/>
            <person name="Hayashi H."/>
            <person name="Hiramatsu K."/>
        </authorList>
    </citation>
    <scope>NUCLEOTIDE SEQUENCE [LARGE SCALE GENOMIC DNA]</scope>
    <source>
        <strain>N315</strain>
    </source>
</reference>
<reference key="2">
    <citation type="submission" date="2007-10" db="UniProtKB">
        <title>Shotgun proteomic analysis of total and membrane protein extracts of S. aureus strain N315.</title>
        <authorList>
            <person name="Vaezzadeh A.R."/>
            <person name="Deshusses J."/>
            <person name="Lescuyer P."/>
            <person name="Hochstrasser D.F."/>
        </authorList>
    </citation>
    <scope>IDENTIFICATION BY MASS SPECTROMETRY [LARGE SCALE ANALYSIS]</scope>
    <source>
        <strain>N315</strain>
    </source>
</reference>
<comment type="similarity">
    <text evidence="1">Belongs to the bacterial ribosomal protein bS16 family.</text>
</comment>
<dbReference type="EMBL" id="BA000018">
    <property type="protein sequence ID" value="BAB42333.1"/>
    <property type="molecule type" value="Genomic_DNA"/>
</dbReference>
<dbReference type="PIR" id="A89897">
    <property type="entry name" value="A89897"/>
</dbReference>
<dbReference type="RefSeq" id="WP_000268754.1">
    <property type="nucleotide sequence ID" value="NC_002745.2"/>
</dbReference>
<dbReference type="SMR" id="P66440"/>
<dbReference type="EnsemblBacteria" id="BAB42333">
    <property type="protein sequence ID" value="BAB42333"/>
    <property type="gene ID" value="BAB42333"/>
</dbReference>
<dbReference type="GeneID" id="66839430"/>
<dbReference type="KEGG" id="sau:SA1081"/>
<dbReference type="HOGENOM" id="CLU_100590_5_0_9"/>
<dbReference type="GO" id="GO:0005737">
    <property type="term" value="C:cytoplasm"/>
    <property type="evidence" value="ECO:0007669"/>
    <property type="project" value="UniProtKB-ARBA"/>
</dbReference>
<dbReference type="GO" id="GO:0015935">
    <property type="term" value="C:small ribosomal subunit"/>
    <property type="evidence" value="ECO:0007669"/>
    <property type="project" value="TreeGrafter"/>
</dbReference>
<dbReference type="GO" id="GO:0003735">
    <property type="term" value="F:structural constituent of ribosome"/>
    <property type="evidence" value="ECO:0007669"/>
    <property type="project" value="InterPro"/>
</dbReference>
<dbReference type="GO" id="GO:0006412">
    <property type="term" value="P:translation"/>
    <property type="evidence" value="ECO:0007669"/>
    <property type="project" value="UniProtKB-UniRule"/>
</dbReference>
<dbReference type="FunFam" id="3.30.1320.10:FF:000002">
    <property type="entry name" value="30S ribosomal protein S16"/>
    <property type="match status" value="1"/>
</dbReference>
<dbReference type="Gene3D" id="3.30.1320.10">
    <property type="match status" value="1"/>
</dbReference>
<dbReference type="HAMAP" id="MF_00385">
    <property type="entry name" value="Ribosomal_bS16"/>
    <property type="match status" value="1"/>
</dbReference>
<dbReference type="InterPro" id="IPR000307">
    <property type="entry name" value="Ribosomal_bS16"/>
</dbReference>
<dbReference type="InterPro" id="IPR023803">
    <property type="entry name" value="Ribosomal_bS16_dom_sf"/>
</dbReference>
<dbReference type="NCBIfam" id="TIGR00002">
    <property type="entry name" value="S16"/>
    <property type="match status" value="1"/>
</dbReference>
<dbReference type="PANTHER" id="PTHR12919">
    <property type="entry name" value="30S RIBOSOMAL PROTEIN S16"/>
    <property type="match status" value="1"/>
</dbReference>
<dbReference type="PANTHER" id="PTHR12919:SF20">
    <property type="entry name" value="SMALL RIBOSOMAL SUBUNIT PROTEIN BS16M"/>
    <property type="match status" value="1"/>
</dbReference>
<dbReference type="Pfam" id="PF00886">
    <property type="entry name" value="Ribosomal_S16"/>
    <property type="match status" value="1"/>
</dbReference>
<dbReference type="SUPFAM" id="SSF54565">
    <property type="entry name" value="Ribosomal protein S16"/>
    <property type="match status" value="1"/>
</dbReference>
<accession>P66440</accession>
<accession>Q99UN2</accession>
<protein>
    <recommendedName>
        <fullName evidence="1">Small ribosomal subunit protein bS16</fullName>
    </recommendedName>
    <alternativeName>
        <fullName evidence="2">30S ribosomal protein S16</fullName>
    </alternativeName>
</protein>